<protein>
    <recommendedName>
        <fullName>NADH dehydrogenase [ubiquinone] 1 beta subcomplex subunit 2</fullName>
    </recommendedName>
</protein>
<evidence type="ECO:0000250" key="1"/>
<evidence type="ECO:0000305" key="2"/>
<evidence type="ECO:0007829" key="3">
    <source>
        <dbReference type="PDB" id="8BEH"/>
    </source>
</evidence>
<name>NDUB2_ARATH</name>
<organism>
    <name type="scientific">Arabidopsis thaliana</name>
    <name type="common">Mouse-ear cress</name>
    <dbReference type="NCBI Taxonomy" id="3702"/>
    <lineage>
        <taxon>Eukaryota</taxon>
        <taxon>Viridiplantae</taxon>
        <taxon>Streptophyta</taxon>
        <taxon>Embryophyta</taxon>
        <taxon>Tracheophyta</taxon>
        <taxon>Spermatophyta</taxon>
        <taxon>Magnoliopsida</taxon>
        <taxon>eudicotyledons</taxon>
        <taxon>Gunneridae</taxon>
        <taxon>Pentapetalae</taxon>
        <taxon>rosids</taxon>
        <taxon>malvids</taxon>
        <taxon>Brassicales</taxon>
        <taxon>Brassicaceae</taxon>
        <taxon>Camelineae</taxon>
        <taxon>Arabidopsis</taxon>
    </lineage>
</organism>
<feature type="chain" id="PRO_0000410994" description="NADH dehydrogenase [ubiquinone] 1 beta subcomplex subunit 2">
    <location>
        <begin position="1"/>
        <end position="69"/>
    </location>
</feature>
<feature type="strand" evidence="3">
    <location>
        <begin position="10"/>
        <end position="12"/>
    </location>
</feature>
<feature type="strand" evidence="3">
    <location>
        <begin position="15"/>
        <end position="17"/>
    </location>
</feature>
<feature type="helix" evidence="3">
    <location>
        <begin position="22"/>
        <end position="51"/>
    </location>
</feature>
<comment type="function">
    <text evidence="1">Accessory subunit of the mitochondrial membrane respiratory chain NADH dehydrogenase (Complex I), that is believed not to be involved in catalysis. Complex I functions in the transfer of electrons from NADH to the respiratory chain. The immediate electron acceptor for the enzyme is believed to be ubiquinone (By similarity).</text>
</comment>
<comment type="subunit">
    <text>Complex I is composed of at least 49 different subunits.</text>
</comment>
<comment type="subcellular location">
    <subcellularLocation>
        <location evidence="1">Mitochondrion inner membrane</location>
        <topology evidence="1">Peripheral membrane protein</topology>
        <orientation evidence="1">Matrix side</orientation>
    </subcellularLocation>
</comment>
<comment type="similarity">
    <text evidence="2">Belongs to the complex I NDUFB2 subunit family.</text>
</comment>
<keyword id="KW-0002">3D-structure</keyword>
<keyword id="KW-0249">Electron transport</keyword>
<keyword id="KW-0472">Membrane</keyword>
<keyword id="KW-0496">Mitochondrion</keyword>
<keyword id="KW-0999">Mitochondrion inner membrane</keyword>
<keyword id="KW-1185">Reference proteome</keyword>
<keyword id="KW-0679">Respiratory chain</keyword>
<keyword id="KW-0813">Transport</keyword>
<reference key="1">
    <citation type="journal article" date="2000" name="Nature">
        <title>Sequence and analysis of chromosome 1 of the plant Arabidopsis thaliana.</title>
        <authorList>
            <person name="Theologis A."/>
            <person name="Ecker J.R."/>
            <person name="Palm C.J."/>
            <person name="Federspiel N.A."/>
            <person name="Kaul S."/>
            <person name="White O."/>
            <person name="Alonso J."/>
            <person name="Altafi H."/>
            <person name="Araujo R."/>
            <person name="Bowman C.L."/>
            <person name="Brooks S.Y."/>
            <person name="Buehler E."/>
            <person name="Chan A."/>
            <person name="Chao Q."/>
            <person name="Chen H."/>
            <person name="Cheuk R.F."/>
            <person name="Chin C.W."/>
            <person name="Chung M.K."/>
            <person name="Conn L."/>
            <person name="Conway A.B."/>
            <person name="Conway A.R."/>
            <person name="Creasy T.H."/>
            <person name="Dewar K."/>
            <person name="Dunn P."/>
            <person name="Etgu P."/>
            <person name="Feldblyum T.V."/>
            <person name="Feng J.-D."/>
            <person name="Fong B."/>
            <person name="Fujii C.Y."/>
            <person name="Gill J.E."/>
            <person name="Goldsmith A.D."/>
            <person name="Haas B."/>
            <person name="Hansen N.F."/>
            <person name="Hughes B."/>
            <person name="Huizar L."/>
            <person name="Hunter J.L."/>
            <person name="Jenkins J."/>
            <person name="Johnson-Hopson C."/>
            <person name="Khan S."/>
            <person name="Khaykin E."/>
            <person name="Kim C.J."/>
            <person name="Koo H.L."/>
            <person name="Kremenetskaia I."/>
            <person name="Kurtz D.B."/>
            <person name="Kwan A."/>
            <person name="Lam B."/>
            <person name="Langin-Hooper S."/>
            <person name="Lee A."/>
            <person name="Lee J.M."/>
            <person name="Lenz C.A."/>
            <person name="Li J.H."/>
            <person name="Li Y.-P."/>
            <person name="Lin X."/>
            <person name="Liu S.X."/>
            <person name="Liu Z.A."/>
            <person name="Luros J.S."/>
            <person name="Maiti R."/>
            <person name="Marziali A."/>
            <person name="Militscher J."/>
            <person name="Miranda M."/>
            <person name="Nguyen M."/>
            <person name="Nierman W.C."/>
            <person name="Osborne B.I."/>
            <person name="Pai G."/>
            <person name="Peterson J."/>
            <person name="Pham P.K."/>
            <person name="Rizzo M."/>
            <person name="Rooney T."/>
            <person name="Rowley D."/>
            <person name="Sakano H."/>
            <person name="Salzberg S.L."/>
            <person name="Schwartz J.R."/>
            <person name="Shinn P."/>
            <person name="Southwick A.M."/>
            <person name="Sun H."/>
            <person name="Tallon L.J."/>
            <person name="Tambunga G."/>
            <person name="Toriumi M.J."/>
            <person name="Town C.D."/>
            <person name="Utterback T."/>
            <person name="Van Aken S."/>
            <person name="Vaysberg M."/>
            <person name="Vysotskaia V.S."/>
            <person name="Walker M."/>
            <person name="Wu D."/>
            <person name="Yu G."/>
            <person name="Fraser C.M."/>
            <person name="Venter J.C."/>
            <person name="Davis R.W."/>
        </authorList>
    </citation>
    <scope>NUCLEOTIDE SEQUENCE [LARGE SCALE GENOMIC DNA]</scope>
    <source>
        <strain>cv. Columbia</strain>
    </source>
</reference>
<reference key="2">
    <citation type="journal article" date="2017" name="Plant J.">
        <title>Araport11: a complete reannotation of the Arabidopsis thaliana reference genome.</title>
        <authorList>
            <person name="Cheng C.Y."/>
            <person name="Krishnakumar V."/>
            <person name="Chan A.P."/>
            <person name="Thibaud-Nissen F."/>
            <person name="Schobel S."/>
            <person name="Town C.D."/>
        </authorList>
    </citation>
    <scope>GENOME REANNOTATION</scope>
    <source>
        <strain>cv. Columbia</strain>
    </source>
</reference>
<reference key="3">
    <citation type="submission" date="2006-06" db="EMBL/GenBank/DDBJ databases">
        <title>Arabidopsis ORF clones.</title>
        <authorList>
            <person name="Quinitio C."/>
            <person name="Chen H."/>
            <person name="Kim C.J."/>
            <person name="Shinn P."/>
            <person name="Ecker J.R."/>
        </authorList>
    </citation>
    <scope>NUCLEOTIDE SEQUENCE [LARGE SCALE MRNA]</scope>
    <source>
        <strain>cv. Columbia</strain>
    </source>
</reference>
<reference key="4">
    <citation type="submission" date="2006-07" db="EMBL/GenBank/DDBJ databases">
        <title>Large-scale analysis of RIKEN Arabidopsis full-length (RAFL) cDNAs.</title>
        <authorList>
            <person name="Totoki Y."/>
            <person name="Seki M."/>
            <person name="Ishida J."/>
            <person name="Nakajima M."/>
            <person name="Enju A."/>
            <person name="Kamiya A."/>
            <person name="Narusaka M."/>
            <person name="Shin-i T."/>
            <person name="Nakagawa M."/>
            <person name="Sakamoto N."/>
            <person name="Oishi K."/>
            <person name="Kohara Y."/>
            <person name="Kobayashi M."/>
            <person name="Toyoda A."/>
            <person name="Sakaki Y."/>
            <person name="Sakurai T."/>
            <person name="Iida K."/>
            <person name="Akiyama K."/>
            <person name="Satou M."/>
            <person name="Toyoda T."/>
            <person name="Konagaya A."/>
            <person name="Carninci P."/>
            <person name="Kawai J."/>
            <person name="Hayashizaki Y."/>
            <person name="Shinozaki K."/>
        </authorList>
    </citation>
    <scope>NUCLEOTIDE SEQUENCE [LARGE SCALE MRNA]</scope>
    <source>
        <strain>cv. Columbia</strain>
    </source>
</reference>
<reference key="5">
    <citation type="submission" date="2002-03" db="EMBL/GenBank/DDBJ databases">
        <title>Full-length cDNA from Arabidopsis thaliana.</title>
        <authorList>
            <person name="Brover V.V."/>
            <person name="Troukhan M.E."/>
            <person name="Alexandrov N.A."/>
            <person name="Lu Y.-P."/>
            <person name="Flavell R.B."/>
            <person name="Feldmann K.A."/>
        </authorList>
    </citation>
    <scope>NUCLEOTIDE SEQUENCE [LARGE SCALE MRNA]</scope>
</reference>
<proteinExistence type="evidence at protein level"/>
<gene>
    <name type="ordered locus">At1g76200</name>
    <name type="ORF">T23E18.30</name>
</gene>
<accession>Q8LDK3</accession>
<dbReference type="EMBL" id="AC009978">
    <property type="status" value="NOT_ANNOTATED_CDS"/>
    <property type="molecule type" value="Genomic_DNA"/>
</dbReference>
<dbReference type="EMBL" id="CP002684">
    <property type="protein sequence ID" value="AEE35810.1"/>
    <property type="molecule type" value="Genomic_DNA"/>
</dbReference>
<dbReference type="EMBL" id="BT025697">
    <property type="protein sequence ID" value="ABF82600.1"/>
    <property type="molecule type" value="mRNA"/>
</dbReference>
<dbReference type="EMBL" id="AK226354">
    <property type="protein sequence ID" value="BAE98502.1"/>
    <property type="molecule type" value="mRNA"/>
</dbReference>
<dbReference type="EMBL" id="AY085964">
    <property type="protein sequence ID" value="AAM63174.1"/>
    <property type="molecule type" value="mRNA"/>
</dbReference>
<dbReference type="RefSeq" id="NP_565128.1">
    <property type="nucleotide sequence ID" value="NM_106270.3"/>
</dbReference>
<dbReference type="PDB" id="7A23">
    <property type="method" value="EM"/>
    <property type="resolution" value="3.70 A"/>
    <property type="chains" value="h=1-69"/>
</dbReference>
<dbReference type="PDB" id="7AQW">
    <property type="method" value="EM"/>
    <property type="resolution" value="3.17 A"/>
    <property type="chains" value="j=1-69"/>
</dbReference>
<dbReference type="PDB" id="7AR7">
    <property type="method" value="EM"/>
    <property type="resolution" value="3.72 A"/>
    <property type="chains" value="j=9-59"/>
</dbReference>
<dbReference type="PDB" id="7AR8">
    <property type="method" value="EM"/>
    <property type="resolution" value="3.53 A"/>
    <property type="chains" value="j=1-69"/>
</dbReference>
<dbReference type="PDB" id="7ARB">
    <property type="method" value="EM"/>
    <property type="resolution" value="3.41 A"/>
    <property type="chains" value="j=1-69"/>
</dbReference>
<dbReference type="PDB" id="8BEH">
    <property type="method" value="EM"/>
    <property type="resolution" value="2.29 A"/>
    <property type="chains" value="j=1-69"/>
</dbReference>
<dbReference type="PDB" id="8BPX">
    <property type="method" value="EM"/>
    <property type="resolution" value="2.09 A"/>
    <property type="chains" value="j=1-69"/>
</dbReference>
<dbReference type="PDB" id="8BQ5">
    <property type="method" value="EM"/>
    <property type="resolution" value="2.73 A"/>
    <property type="chains" value="j=1-69"/>
</dbReference>
<dbReference type="PDB" id="8BQ6">
    <property type="method" value="EM"/>
    <property type="resolution" value="2.80 A"/>
    <property type="chains" value="j=1-69"/>
</dbReference>
<dbReference type="PDBsum" id="7A23"/>
<dbReference type="PDBsum" id="7AQW"/>
<dbReference type="PDBsum" id="7AR7"/>
<dbReference type="PDBsum" id="7AR8"/>
<dbReference type="PDBsum" id="7ARB"/>
<dbReference type="PDBsum" id="8BEH"/>
<dbReference type="PDBsum" id="8BPX"/>
<dbReference type="PDBsum" id="8BQ5"/>
<dbReference type="PDBsum" id="8BQ6"/>
<dbReference type="EMDB" id="EMD-11874"/>
<dbReference type="EMDB" id="EMD-11875"/>
<dbReference type="EMDB" id="EMD-11876"/>
<dbReference type="EMDB" id="EMD-11878"/>
<dbReference type="EMDB" id="EMD-16003"/>
<dbReference type="EMDB" id="EMD-16168"/>
<dbReference type="EMDB" id="EMD-16171"/>
<dbReference type="EMDB" id="EMD-16172"/>
<dbReference type="SMR" id="Q8LDK3"/>
<dbReference type="FunCoup" id="Q8LDK3">
    <property type="interactions" value="376"/>
</dbReference>
<dbReference type="IntAct" id="Q8LDK3">
    <property type="interactions" value="1"/>
</dbReference>
<dbReference type="STRING" id="3702.Q8LDK3"/>
<dbReference type="PaxDb" id="3702-AT1G76200.1"/>
<dbReference type="ProteomicsDB" id="251088"/>
<dbReference type="EnsemblPlants" id="AT1G76200.1">
    <property type="protein sequence ID" value="AT1G76200.1"/>
    <property type="gene ID" value="AT1G76200"/>
</dbReference>
<dbReference type="GeneID" id="843953"/>
<dbReference type="Gramene" id="AT1G76200.1">
    <property type="protein sequence ID" value="AT1G76200.1"/>
    <property type="gene ID" value="AT1G76200"/>
</dbReference>
<dbReference type="KEGG" id="ath:AT1G76200"/>
<dbReference type="Araport" id="AT1G76200"/>
<dbReference type="TAIR" id="AT1G76200"/>
<dbReference type="eggNOG" id="ENOG502S46B">
    <property type="taxonomic scope" value="Eukaryota"/>
</dbReference>
<dbReference type="HOGENOM" id="CLU_181953_0_0_1"/>
<dbReference type="InParanoid" id="Q8LDK3"/>
<dbReference type="OMA" id="WEGHDDH"/>
<dbReference type="OrthoDB" id="531564at2759"/>
<dbReference type="PhylomeDB" id="Q8LDK3"/>
<dbReference type="PRO" id="PR:Q8LDK3"/>
<dbReference type="Proteomes" id="UP000006548">
    <property type="component" value="Chromosome 1"/>
</dbReference>
<dbReference type="ExpressionAtlas" id="Q8LDK3">
    <property type="expression patterns" value="baseline and differential"/>
</dbReference>
<dbReference type="GO" id="GO:0005743">
    <property type="term" value="C:mitochondrial inner membrane"/>
    <property type="evidence" value="ECO:0007669"/>
    <property type="project" value="UniProtKB-SubCell"/>
</dbReference>
<dbReference type="GO" id="GO:0045271">
    <property type="term" value="C:respiratory chain complex I"/>
    <property type="evidence" value="ECO:0007669"/>
    <property type="project" value="InterPro"/>
</dbReference>
<dbReference type="InterPro" id="IPR044980">
    <property type="entry name" value="NDUFB2_plant/fungi"/>
</dbReference>
<dbReference type="PANTHER" id="PTHR36987:SF1">
    <property type="entry name" value="NADH DEHYDROGENASE [UBIQUINONE] 1 BETA SUBCOMPLEX SUBUNIT 2"/>
    <property type="match status" value="1"/>
</dbReference>
<dbReference type="PANTHER" id="PTHR36987">
    <property type="entry name" value="NADH DEHYDROGENASE [UBIQUINONE] 1 BETA SUBCOMPLEX SUBUNIT 2-LIKE"/>
    <property type="match status" value="1"/>
</dbReference>
<sequence length="69" mass="7568">MGGGGHGGGITYKGVTVHTPKTWHTVTGKGLCAVMWFWILYRAKQDGPVVMGWRHPWDGHGDHGHGDHH</sequence>